<organism>
    <name type="scientific">Rhodopseudomonas palustris (strain HaA2)</name>
    <dbReference type="NCBI Taxonomy" id="316058"/>
    <lineage>
        <taxon>Bacteria</taxon>
        <taxon>Pseudomonadati</taxon>
        <taxon>Pseudomonadota</taxon>
        <taxon>Alphaproteobacteria</taxon>
        <taxon>Hyphomicrobiales</taxon>
        <taxon>Nitrobacteraceae</taxon>
        <taxon>Rhodopseudomonas</taxon>
    </lineage>
</organism>
<comment type="catalytic activity">
    <reaction evidence="1">
        <text>(R)-pantothenate + ATP = (R)-4'-phosphopantothenate + ADP + H(+)</text>
        <dbReference type="Rhea" id="RHEA:16373"/>
        <dbReference type="ChEBI" id="CHEBI:10986"/>
        <dbReference type="ChEBI" id="CHEBI:15378"/>
        <dbReference type="ChEBI" id="CHEBI:29032"/>
        <dbReference type="ChEBI" id="CHEBI:30616"/>
        <dbReference type="ChEBI" id="CHEBI:456216"/>
        <dbReference type="EC" id="2.7.1.33"/>
    </reaction>
</comment>
<comment type="pathway">
    <text evidence="1">Cofactor biosynthesis; coenzyme A biosynthesis; CoA from (R)-pantothenate: step 1/5.</text>
</comment>
<comment type="subcellular location">
    <subcellularLocation>
        <location evidence="1">Cytoplasm</location>
    </subcellularLocation>
</comment>
<comment type="similarity">
    <text evidence="1">Belongs to the prokaryotic pantothenate kinase family.</text>
</comment>
<protein>
    <recommendedName>
        <fullName evidence="1">Pantothenate kinase</fullName>
        <ecNumber evidence="1">2.7.1.33</ecNumber>
    </recommendedName>
    <alternativeName>
        <fullName evidence="1">Pantothenic acid kinase</fullName>
    </alternativeName>
</protein>
<gene>
    <name evidence="1" type="primary">coaA</name>
    <name type="ordered locus">RPB_0411</name>
</gene>
<sequence length="318" mass="36183">MDARSELHHYNPYRVFSRSEWANLRQDTPMTLDAGEVSTLRSLHDRLDLSEVEEIYLPMSRLLSIHVGAMQQLYYAQRRFLGVVERKMPYIIGVAGSVAVGKSTTARVLQALLARWSPRPKVDLITTDGFLHPNAVLERAGLMQKKGFPESYDLPALLAFLSDIKSGRRKVRAPIYSHLTYDIVPNKFAVVDRPDILIVEGVNVLQTGRLPRDGKAVPVVSDFFDFSVYIDADEPVLRDWYIRRFLALRDTAFHDPRSYFHRYAPLSDEEATATAIAIWERTNLANLEDNILPTRPRATLILKKGADHVVDSVALRRL</sequence>
<evidence type="ECO:0000255" key="1">
    <source>
        <dbReference type="HAMAP-Rule" id="MF_00215"/>
    </source>
</evidence>
<dbReference type="EC" id="2.7.1.33" evidence="1"/>
<dbReference type="EMBL" id="CP000250">
    <property type="protein sequence ID" value="ABD05122.1"/>
    <property type="molecule type" value="Genomic_DNA"/>
</dbReference>
<dbReference type="RefSeq" id="WP_011439312.1">
    <property type="nucleotide sequence ID" value="NC_007778.1"/>
</dbReference>
<dbReference type="SMR" id="Q2J338"/>
<dbReference type="STRING" id="316058.RPB_0411"/>
<dbReference type="KEGG" id="rpb:RPB_0411"/>
<dbReference type="eggNOG" id="COG1072">
    <property type="taxonomic scope" value="Bacteria"/>
</dbReference>
<dbReference type="HOGENOM" id="CLU_053818_1_1_5"/>
<dbReference type="UniPathway" id="UPA00241">
    <property type="reaction ID" value="UER00352"/>
</dbReference>
<dbReference type="Proteomes" id="UP000008809">
    <property type="component" value="Chromosome"/>
</dbReference>
<dbReference type="GO" id="GO:0005737">
    <property type="term" value="C:cytoplasm"/>
    <property type="evidence" value="ECO:0007669"/>
    <property type="project" value="UniProtKB-SubCell"/>
</dbReference>
<dbReference type="GO" id="GO:0005524">
    <property type="term" value="F:ATP binding"/>
    <property type="evidence" value="ECO:0007669"/>
    <property type="project" value="UniProtKB-UniRule"/>
</dbReference>
<dbReference type="GO" id="GO:0004594">
    <property type="term" value="F:pantothenate kinase activity"/>
    <property type="evidence" value="ECO:0007669"/>
    <property type="project" value="UniProtKB-UniRule"/>
</dbReference>
<dbReference type="GO" id="GO:0015937">
    <property type="term" value="P:coenzyme A biosynthetic process"/>
    <property type="evidence" value="ECO:0007669"/>
    <property type="project" value="UniProtKB-UniRule"/>
</dbReference>
<dbReference type="CDD" id="cd02025">
    <property type="entry name" value="PanK"/>
    <property type="match status" value="1"/>
</dbReference>
<dbReference type="Gene3D" id="3.40.50.300">
    <property type="entry name" value="P-loop containing nucleotide triphosphate hydrolases"/>
    <property type="match status" value="1"/>
</dbReference>
<dbReference type="HAMAP" id="MF_00215">
    <property type="entry name" value="Pantothen_kinase_1"/>
    <property type="match status" value="1"/>
</dbReference>
<dbReference type="InterPro" id="IPR027417">
    <property type="entry name" value="P-loop_NTPase"/>
</dbReference>
<dbReference type="InterPro" id="IPR004566">
    <property type="entry name" value="PanK"/>
</dbReference>
<dbReference type="InterPro" id="IPR006083">
    <property type="entry name" value="PRK/URK"/>
</dbReference>
<dbReference type="NCBIfam" id="TIGR00554">
    <property type="entry name" value="panK_bact"/>
    <property type="match status" value="1"/>
</dbReference>
<dbReference type="PANTHER" id="PTHR10285">
    <property type="entry name" value="URIDINE KINASE"/>
    <property type="match status" value="1"/>
</dbReference>
<dbReference type="Pfam" id="PF00485">
    <property type="entry name" value="PRK"/>
    <property type="match status" value="1"/>
</dbReference>
<dbReference type="PIRSF" id="PIRSF000545">
    <property type="entry name" value="Pantothenate_kin"/>
    <property type="match status" value="1"/>
</dbReference>
<dbReference type="SUPFAM" id="SSF52540">
    <property type="entry name" value="P-loop containing nucleoside triphosphate hydrolases"/>
    <property type="match status" value="1"/>
</dbReference>
<feature type="chain" id="PRO_1000043241" description="Pantothenate kinase">
    <location>
        <begin position="1"/>
        <end position="318"/>
    </location>
</feature>
<feature type="binding site" evidence="1">
    <location>
        <begin position="96"/>
        <end position="103"/>
    </location>
    <ligand>
        <name>ATP</name>
        <dbReference type="ChEBI" id="CHEBI:30616"/>
    </ligand>
</feature>
<keyword id="KW-0067">ATP-binding</keyword>
<keyword id="KW-0173">Coenzyme A biosynthesis</keyword>
<keyword id="KW-0963">Cytoplasm</keyword>
<keyword id="KW-0418">Kinase</keyword>
<keyword id="KW-0547">Nucleotide-binding</keyword>
<keyword id="KW-1185">Reference proteome</keyword>
<keyword id="KW-0808">Transferase</keyword>
<accession>Q2J338</accession>
<name>COAA_RHOP2</name>
<proteinExistence type="inferred from homology"/>
<reference key="1">
    <citation type="submission" date="2006-01" db="EMBL/GenBank/DDBJ databases">
        <title>Complete sequence of Rhodopseudomonas palustris HaA2.</title>
        <authorList>
            <consortium name="US DOE Joint Genome Institute"/>
            <person name="Copeland A."/>
            <person name="Lucas S."/>
            <person name="Lapidus A."/>
            <person name="Barry K."/>
            <person name="Detter J.C."/>
            <person name="Glavina T."/>
            <person name="Hammon N."/>
            <person name="Israni S."/>
            <person name="Pitluck S."/>
            <person name="Chain P."/>
            <person name="Malfatti S."/>
            <person name="Shin M."/>
            <person name="Vergez L."/>
            <person name="Schmutz J."/>
            <person name="Larimer F."/>
            <person name="Land M."/>
            <person name="Hauser L."/>
            <person name="Pelletier D.A."/>
            <person name="Kyrpides N."/>
            <person name="Anderson I."/>
            <person name="Oda Y."/>
            <person name="Harwood C.S."/>
            <person name="Richardson P."/>
        </authorList>
    </citation>
    <scope>NUCLEOTIDE SEQUENCE [LARGE SCALE GENOMIC DNA]</scope>
    <source>
        <strain>HaA2</strain>
    </source>
</reference>